<accession>B7LP01</accession>
<gene>
    <name evidence="1" type="primary">flhD</name>
    <name type="ordered locus">EFER_1129</name>
</gene>
<keyword id="KW-0010">Activator</keyword>
<keyword id="KW-1005">Bacterial flagellum biogenesis</keyword>
<keyword id="KW-0963">Cytoplasm</keyword>
<keyword id="KW-1015">Disulfide bond</keyword>
<keyword id="KW-0238">DNA-binding</keyword>
<keyword id="KW-0804">Transcription</keyword>
<keyword id="KW-0805">Transcription regulation</keyword>
<dbReference type="EMBL" id="CU928158">
    <property type="protein sequence ID" value="CAQ88657.1"/>
    <property type="status" value="ALT_INIT"/>
    <property type="molecule type" value="Genomic_DNA"/>
</dbReference>
<dbReference type="SMR" id="B7LP01"/>
<dbReference type="KEGG" id="efe:EFER_1129"/>
<dbReference type="HOGENOM" id="CLU_144160_0_0_6"/>
<dbReference type="Proteomes" id="UP000000745">
    <property type="component" value="Chromosome"/>
</dbReference>
<dbReference type="GO" id="GO:0005737">
    <property type="term" value="C:cytoplasm"/>
    <property type="evidence" value="ECO:0007669"/>
    <property type="project" value="UniProtKB-SubCell"/>
</dbReference>
<dbReference type="GO" id="GO:0003677">
    <property type="term" value="F:DNA binding"/>
    <property type="evidence" value="ECO:0007669"/>
    <property type="project" value="UniProtKB-UniRule"/>
</dbReference>
<dbReference type="GO" id="GO:0044780">
    <property type="term" value="P:bacterial-type flagellum assembly"/>
    <property type="evidence" value="ECO:0007669"/>
    <property type="project" value="InterPro"/>
</dbReference>
<dbReference type="GO" id="GO:0045893">
    <property type="term" value="P:positive regulation of DNA-templated transcription"/>
    <property type="evidence" value="ECO:0007669"/>
    <property type="project" value="InterPro"/>
</dbReference>
<dbReference type="GO" id="GO:1902208">
    <property type="term" value="P:regulation of bacterial-type flagellum assembly"/>
    <property type="evidence" value="ECO:0007669"/>
    <property type="project" value="UniProtKB-UniRule"/>
</dbReference>
<dbReference type="Gene3D" id="1.10.4000.10">
    <property type="entry name" value="Flagellar transcriptional activator FlhD"/>
    <property type="match status" value="1"/>
</dbReference>
<dbReference type="HAMAP" id="MF_00725">
    <property type="entry name" value="FlhD"/>
    <property type="match status" value="1"/>
</dbReference>
<dbReference type="InterPro" id="IPR023559">
    <property type="entry name" value="Flagellar_FlhD"/>
</dbReference>
<dbReference type="InterPro" id="IPR036194">
    <property type="entry name" value="FlhD_sf"/>
</dbReference>
<dbReference type="NCBIfam" id="NF002783">
    <property type="entry name" value="PRK02909.1-1"/>
    <property type="match status" value="1"/>
</dbReference>
<dbReference type="Pfam" id="PF05247">
    <property type="entry name" value="FlhD"/>
    <property type="match status" value="1"/>
</dbReference>
<dbReference type="SUPFAM" id="SSF63592">
    <property type="entry name" value="Flagellar transcriptional activator FlhD"/>
    <property type="match status" value="1"/>
</dbReference>
<evidence type="ECO:0000255" key="1">
    <source>
        <dbReference type="HAMAP-Rule" id="MF_00725"/>
    </source>
</evidence>
<evidence type="ECO:0000305" key="2"/>
<comment type="function">
    <text evidence="1">Functions in complex with FlhC as a master transcriptional regulator that regulates transcription of several flagellar and non-flagellar operons by binding to their promoter region. Activates expression of class 2 flagellar genes, including fliA, which is a flagellum-specific sigma factor that turns on the class 3 genes. Also regulates genes whose products function in a variety of physiological pathways.</text>
</comment>
<comment type="subunit">
    <text evidence="1">Homodimer; disulfide-linked. Forms a heterohexamer composed of two FlhC and four FlhD subunits. Each FlhC binds a FlhD dimer, forming a heterotrimer, and a hexamer assembles by dimerization of two heterotrimers.</text>
</comment>
<comment type="subcellular location">
    <subcellularLocation>
        <location evidence="1">Cytoplasm</location>
    </subcellularLocation>
</comment>
<comment type="domain">
    <text evidence="1">The C-terminal region contains a putative helix-turn-helix (HTH) motif, suggesting that this region may bind DNA.</text>
</comment>
<comment type="similarity">
    <text evidence="1">Belongs to the FlhD family.</text>
</comment>
<comment type="sequence caution" evidence="2">
    <conflict type="erroneous initiation">
        <sequence resource="EMBL-CDS" id="CAQ88657"/>
    </conflict>
    <text>Extended N-terminus.</text>
</comment>
<organism>
    <name type="scientific">Escherichia fergusonii (strain ATCC 35469 / DSM 13698 / CCUG 18766 / IAM 14443 / JCM 21226 / LMG 7866 / NBRC 102419 / NCTC 12128 / CDC 0568-73)</name>
    <dbReference type="NCBI Taxonomy" id="585054"/>
    <lineage>
        <taxon>Bacteria</taxon>
        <taxon>Pseudomonadati</taxon>
        <taxon>Pseudomonadota</taxon>
        <taxon>Gammaproteobacteria</taxon>
        <taxon>Enterobacterales</taxon>
        <taxon>Enterobacteriaceae</taxon>
        <taxon>Escherichia</taxon>
    </lineage>
</organism>
<reference key="1">
    <citation type="journal article" date="2009" name="PLoS Genet.">
        <title>Organised genome dynamics in the Escherichia coli species results in highly diverse adaptive paths.</title>
        <authorList>
            <person name="Touchon M."/>
            <person name="Hoede C."/>
            <person name="Tenaillon O."/>
            <person name="Barbe V."/>
            <person name="Baeriswyl S."/>
            <person name="Bidet P."/>
            <person name="Bingen E."/>
            <person name="Bonacorsi S."/>
            <person name="Bouchier C."/>
            <person name="Bouvet O."/>
            <person name="Calteau A."/>
            <person name="Chiapello H."/>
            <person name="Clermont O."/>
            <person name="Cruveiller S."/>
            <person name="Danchin A."/>
            <person name="Diard M."/>
            <person name="Dossat C."/>
            <person name="Karoui M.E."/>
            <person name="Frapy E."/>
            <person name="Garry L."/>
            <person name="Ghigo J.M."/>
            <person name="Gilles A.M."/>
            <person name="Johnson J."/>
            <person name="Le Bouguenec C."/>
            <person name="Lescat M."/>
            <person name="Mangenot S."/>
            <person name="Martinez-Jehanne V."/>
            <person name="Matic I."/>
            <person name="Nassif X."/>
            <person name="Oztas S."/>
            <person name="Petit M.A."/>
            <person name="Pichon C."/>
            <person name="Rouy Z."/>
            <person name="Ruf C.S."/>
            <person name="Schneider D."/>
            <person name="Tourret J."/>
            <person name="Vacherie B."/>
            <person name="Vallenet D."/>
            <person name="Medigue C."/>
            <person name="Rocha E.P.C."/>
            <person name="Denamur E."/>
        </authorList>
    </citation>
    <scope>NUCLEOTIDE SEQUENCE [LARGE SCALE GENOMIC DNA]</scope>
    <source>
        <strain>ATCC 35469 / DSM 13698 / BCRC 15582 / CCUG 18766 / IAM 14443 / JCM 21226 / LMG 7866 / NBRC 102419 / NCTC 12128 / CDC 0568-73</strain>
    </source>
</reference>
<sequence>MKIMHTSELLKHIYDINLSYLLLAQRLILQDKASAMFRLGIDEEMATTLEALTLPQMVKLAETNQLVCHFRFDNHQTITRLTQDSRVDDLQQIHTGIMLSTRLLNEANQQDASERKRRG</sequence>
<proteinExistence type="inferred from homology"/>
<feature type="chain" id="PRO_0000406775" description="Flagellar transcriptional regulator FlhD">
    <location>
        <begin position="1"/>
        <end position="119"/>
    </location>
</feature>
<feature type="disulfide bond" description="Interchain" evidence="1">
    <location>
        <position position="68"/>
    </location>
</feature>
<name>FLHD_ESCF3</name>
<protein>
    <recommendedName>
        <fullName evidence="1">Flagellar transcriptional regulator FlhD</fullName>
    </recommendedName>
</protein>